<feature type="propeptide" id="PRO_0000021658" evidence="2">
    <location>
        <begin position="1"/>
        <end position="15"/>
    </location>
</feature>
<feature type="chain" id="PRO_0000021659" description="Microcin H47">
    <location>
        <begin position="16"/>
        <end position="75"/>
    </location>
</feature>
<feature type="transmembrane region" description="Helical" evidence="2">
    <location>
        <begin position="30"/>
        <end position="50"/>
    </location>
</feature>
<evidence type="ECO:0000250" key="1"/>
<evidence type="ECO:0000255" key="2"/>
<evidence type="ECO:0000305" key="3"/>
<protein>
    <recommendedName>
        <fullName>Microcin H47</fullName>
        <shortName>MccH47</shortName>
    </recommendedName>
</protein>
<proteinExistence type="inferred from homology"/>
<accession>P62531</accession>
<accession>Q9RM53</accession>
<keyword id="KW-0044">Antibiotic</keyword>
<keyword id="KW-0929">Antimicrobial</keyword>
<keyword id="KW-0078">Bacteriocin</keyword>
<keyword id="KW-1032">Host cell membrane</keyword>
<keyword id="KW-1043">Host membrane</keyword>
<keyword id="KW-0472">Membrane</keyword>
<keyword id="KW-1185">Reference proteome</keyword>
<keyword id="KW-0964">Secreted</keyword>
<keyword id="KW-0812">Transmembrane</keyword>
<keyword id="KW-1133">Transmembrane helix</keyword>
<name>MCHB_ECOL6</name>
<sequence>MREITESQLRYISGAGGAPATSANAAGAAAIVGALAGIPGGPLGVVVGAVSAGLTTAIGSTVGSGSASSSAGGGS</sequence>
<gene>
    <name type="primary">mchB</name>
    <name type="ordered locus">c1227</name>
</gene>
<dbReference type="EMBL" id="AE014075">
    <property type="protein sequence ID" value="AAN79685.1"/>
    <property type="status" value="ALT_INIT"/>
    <property type="molecule type" value="Genomic_DNA"/>
</dbReference>
<dbReference type="RefSeq" id="WP_001375214.1">
    <property type="nucleotide sequence ID" value="NZ_CP051263.1"/>
</dbReference>
<dbReference type="STRING" id="199310.c1227"/>
<dbReference type="KEGG" id="ecc:c1227"/>
<dbReference type="HOGENOM" id="CLU_182906_0_0_6"/>
<dbReference type="Proteomes" id="UP000001410">
    <property type="component" value="Chromosome"/>
</dbReference>
<dbReference type="GO" id="GO:0005576">
    <property type="term" value="C:extracellular region"/>
    <property type="evidence" value="ECO:0007669"/>
    <property type="project" value="UniProtKB-SubCell"/>
</dbReference>
<dbReference type="GO" id="GO:0020002">
    <property type="term" value="C:host cell plasma membrane"/>
    <property type="evidence" value="ECO:0007669"/>
    <property type="project" value="UniProtKB-SubCell"/>
</dbReference>
<dbReference type="GO" id="GO:0016020">
    <property type="term" value="C:membrane"/>
    <property type="evidence" value="ECO:0007669"/>
    <property type="project" value="UniProtKB-KW"/>
</dbReference>
<dbReference type="GO" id="GO:0042742">
    <property type="term" value="P:defense response to bacterium"/>
    <property type="evidence" value="ECO:0007669"/>
    <property type="project" value="UniProtKB-KW"/>
</dbReference>
<dbReference type="GO" id="GO:0031640">
    <property type="term" value="P:killing of cells of another organism"/>
    <property type="evidence" value="ECO:0007669"/>
    <property type="project" value="UniProtKB-KW"/>
</dbReference>
<organism>
    <name type="scientific">Escherichia coli O6:H1 (strain CFT073 / ATCC 700928 / UPEC)</name>
    <dbReference type="NCBI Taxonomy" id="199310"/>
    <lineage>
        <taxon>Bacteria</taxon>
        <taxon>Pseudomonadati</taxon>
        <taxon>Pseudomonadota</taxon>
        <taxon>Gammaproteobacteria</taxon>
        <taxon>Enterobacterales</taxon>
        <taxon>Enterobacteriaceae</taxon>
        <taxon>Escherichia</taxon>
    </lineage>
</organism>
<comment type="function">
    <text evidence="1">Bactericidal antibiotic. Active on bacteria phylogenetically related to the producing strain (By similarity).</text>
</comment>
<comment type="subcellular location">
    <subcellularLocation>
        <location evidence="1">Secreted</location>
    </subcellularLocation>
    <subcellularLocation>
        <location evidence="3">Host cell membrane</location>
        <topology evidence="3">Single-pass membrane protein</topology>
    </subcellularLocation>
    <text evidence="1">Probably through the MchEF ABC transporter system.</text>
</comment>
<comment type="sequence caution" evidence="3">
    <conflict type="erroneous initiation">
        <sequence resource="EMBL-CDS" id="AAN79685"/>
    </conflict>
</comment>
<reference key="1">
    <citation type="journal article" date="2002" name="Proc. Natl. Acad. Sci. U.S.A.">
        <title>Extensive mosaic structure revealed by the complete genome sequence of uropathogenic Escherichia coli.</title>
        <authorList>
            <person name="Welch R.A."/>
            <person name="Burland V."/>
            <person name="Plunkett G. III"/>
            <person name="Redford P."/>
            <person name="Roesch P."/>
            <person name="Rasko D."/>
            <person name="Buckles E.L."/>
            <person name="Liou S.-R."/>
            <person name="Boutin A."/>
            <person name="Hackett J."/>
            <person name="Stroud D."/>
            <person name="Mayhew G.F."/>
            <person name="Rose D.J."/>
            <person name="Zhou S."/>
            <person name="Schwartz D.C."/>
            <person name="Perna N.T."/>
            <person name="Mobley H.L.T."/>
            <person name="Donnenberg M.S."/>
            <person name="Blattner F.R."/>
        </authorList>
    </citation>
    <scope>NUCLEOTIDE SEQUENCE [LARGE SCALE GENOMIC DNA]</scope>
    <source>
        <strain>CFT073 / ATCC 700928 / UPEC</strain>
    </source>
</reference>